<accession>F7ZLS5</accession>
<reference key="1">
    <citation type="journal article" date="2011" name="BMC Genomics">
        <title>Comparative genome analysis and genome-guided physiological analysis of Roseobacter litoralis.</title>
        <authorList>
            <person name="Kalhoefer D."/>
            <person name="Thole S."/>
            <person name="Voget S."/>
            <person name="Lehmann R."/>
            <person name="Liesegang H."/>
            <person name="Wollher A."/>
            <person name="Daniel R."/>
            <person name="Simon M."/>
            <person name="Brinkhoff T."/>
        </authorList>
    </citation>
    <scope>NUCLEOTIDE SEQUENCE [LARGE SCALE GENOMIC DNA]</scope>
    <source>
        <strain>ATCC 49566 / DSM 6996 / JCM 21268 / NBRC 15278 / OCh 149</strain>
    </source>
</reference>
<reference key="2">
    <citation type="journal article" date="2012" name="Proc. Natl. Acad. Sci. U.S.A.">
        <title>Homology models guide discovery of diverse enzyme specificities among dipeptide epimerases in the enolase superfamily.</title>
        <authorList>
            <person name="Lukk T."/>
            <person name="Sakai A."/>
            <person name="Kalyanaraman C."/>
            <person name="Brown S.D."/>
            <person name="Imker H.J."/>
            <person name="Song L."/>
            <person name="Fedorov A.A."/>
            <person name="Fedorov E.V."/>
            <person name="Toro R."/>
            <person name="Hillerich B."/>
            <person name="Seidel R."/>
            <person name="Patskovsky Y."/>
            <person name="Vetting M.W."/>
            <person name="Nair S.K."/>
            <person name="Babbitt P.C."/>
            <person name="Almo S.C."/>
            <person name="Gerlt J.A."/>
            <person name="Jacobson M.P."/>
        </authorList>
    </citation>
    <scope>FUNCTION</scope>
    <scope>COFACTOR</scope>
</reference>
<name>HYEP_ROSLO</name>
<comment type="function">
    <text evidence="2">Dipeptide epimerase with a preference for hydrophobic substrates. Catalyzes the epimerization of L-Ala-L-Thr, L-Ala-L-Met, L-Ala-L-His, L-Ala-L-Phe, L-Ala-L-Tyr, L-Ala-L-Trp, L-Ile-L-Ala, L-Ile-L-Ser, L-Ile-L-Met, L-Ile-L-His, L-Ile-L-Phe, L-Ile-L-Tyr, L-Ile-L-Trp, L-Phe-L-Met, L-Phe-L-His, L-Phe-L-Phe, L-Phe-L-Tyr, L-Phe-L-Trp, L-Phe-L-Ser, L-Phe-L-Thr and L-Phe-L-Lys (in vitro).</text>
</comment>
<comment type="cofactor">
    <cofactor evidence="2">
        <name>Mg(2+)</name>
        <dbReference type="ChEBI" id="CHEBI:18420"/>
    </cofactor>
    <text evidence="2">Binds 1 Mg(2+) ion per subunit.</text>
</comment>
<comment type="miscellaneous">
    <text>Part of a large, functionally divergent protein family. Protein modeling and substrate docking was used to predict the substrate specificity, prior to biochemical analysis.</text>
</comment>
<comment type="similarity">
    <text evidence="3">Belongs to the mandelate racemase/muconate lactonizing enzyme family.</text>
</comment>
<keyword id="KW-0413">Isomerase</keyword>
<keyword id="KW-0460">Magnesium</keyword>
<keyword id="KW-0479">Metal-binding</keyword>
<gene>
    <name type="ordered locus">RLO149_c021500</name>
</gene>
<dbReference type="EC" id="5.1.1.-"/>
<dbReference type="EMBL" id="CP002623">
    <property type="protein sequence ID" value="AEI94126.1"/>
    <property type="molecule type" value="Genomic_DNA"/>
</dbReference>
<dbReference type="RefSeq" id="WP_013962050.1">
    <property type="nucleotide sequence ID" value="NC_015730.1"/>
</dbReference>
<dbReference type="SMR" id="F7ZLS5"/>
<dbReference type="STRING" id="391595.RLO149_c021500"/>
<dbReference type="KEGG" id="rli:RLO149_c021500"/>
<dbReference type="eggNOG" id="COG4948">
    <property type="taxonomic scope" value="Bacteria"/>
</dbReference>
<dbReference type="HOGENOM" id="CLU_030273_4_3_5"/>
<dbReference type="OrthoDB" id="9802699at2"/>
<dbReference type="Proteomes" id="UP000001353">
    <property type="component" value="Chromosome"/>
</dbReference>
<dbReference type="GO" id="GO:0000287">
    <property type="term" value="F:magnesium ion binding"/>
    <property type="evidence" value="ECO:0000314"/>
    <property type="project" value="UniProtKB"/>
</dbReference>
<dbReference type="GO" id="GO:0016854">
    <property type="term" value="F:racemase and epimerase activity"/>
    <property type="evidence" value="ECO:0000314"/>
    <property type="project" value="UniProtKB"/>
</dbReference>
<dbReference type="GO" id="GO:0016855">
    <property type="term" value="F:racemase and epimerase activity, acting on amino acids and derivatives"/>
    <property type="evidence" value="ECO:0007669"/>
    <property type="project" value="InterPro"/>
</dbReference>
<dbReference type="GO" id="GO:0009063">
    <property type="term" value="P:amino acid catabolic process"/>
    <property type="evidence" value="ECO:0007669"/>
    <property type="project" value="InterPro"/>
</dbReference>
<dbReference type="GO" id="GO:0006518">
    <property type="term" value="P:peptide metabolic process"/>
    <property type="evidence" value="ECO:0000314"/>
    <property type="project" value="UniProtKB"/>
</dbReference>
<dbReference type="CDD" id="cd03319">
    <property type="entry name" value="L-Ala-DL-Glu_epimerase"/>
    <property type="match status" value="1"/>
</dbReference>
<dbReference type="Gene3D" id="3.20.20.120">
    <property type="entry name" value="Enolase-like C-terminal domain"/>
    <property type="match status" value="1"/>
</dbReference>
<dbReference type="Gene3D" id="3.30.390.10">
    <property type="entry name" value="Enolase-like, N-terminal domain"/>
    <property type="match status" value="1"/>
</dbReference>
<dbReference type="InterPro" id="IPR034593">
    <property type="entry name" value="DgoD-like"/>
</dbReference>
<dbReference type="InterPro" id="IPR034603">
    <property type="entry name" value="Dipeptide_epimerase"/>
</dbReference>
<dbReference type="InterPro" id="IPR036849">
    <property type="entry name" value="Enolase-like_C_sf"/>
</dbReference>
<dbReference type="InterPro" id="IPR029017">
    <property type="entry name" value="Enolase-like_N"/>
</dbReference>
<dbReference type="InterPro" id="IPR029065">
    <property type="entry name" value="Enolase_C-like"/>
</dbReference>
<dbReference type="InterPro" id="IPR018110">
    <property type="entry name" value="Mandel_Rmase/mucon_lact_enz_CS"/>
</dbReference>
<dbReference type="InterPro" id="IPR013342">
    <property type="entry name" value="Mandelate_racemase_C"/>
</dbReference>
<dbReference type="InterPro" id="IPR013341">
    <property type="entry name" value="Mandelate_racemase_N_dom"/>
</dbReference>
<dbReference type="PANTHER" id="PTHR48080">
    <property type="entry name" value="D-GALACTONATE DEHYDRATASE-RELATED"/>
    <property type="match status" value="1"/>
</dbReference>
<dbReference type="PANTHER" id="PTHR48080:SF3">
    <property type="entry name" value="ENOLASE SUPERFAMILY MEMBER DDB_G0284701"/>
    <property type="match status" value="1"/>
</dbReference>
<dbReference type="Pfam" id="PF13378">
    <property type="entry name" value="MR_MLE_C"/>
    <property type="match status" value="1"/>
</dbReference>
<dbReference type="Pfam" id="PF02746">
    <property type="entry name" value="MR_MLE_N"/>
    <property type="match status" value="1"/>
</dbReference>
<dbReference type="SFLD" id="SFLDS00001">
    <property type="entry name" value="Enolase"/>
    <property type="match status" value="1"/>
</dbReference>
<dbReference type="SFLD" id="SFLDF00009">
    <property type="entry name" value="o-succinylbenzoate_synthase"/>
    <property type="match status" value="1"/>
</dbReference>
<dbReference type="SMART" id="SM00922">
    <property type="entry name" value="MR_MLE"/>
    <property type="match status" value="1"/>
</dbReference>
<dbReference type="SUPFAM" id="SSF51604">
    <property type="entry name" value="Enolase C-terminal domain-like"/>
    <property type="match status" value="1"/>
</dbReference>
<dbReference type="SUPFAM" id="SSF54826">
    <property type="entry name" value="Enolase N-terminal domain-like"/>
    <property type="match status" value="1"/>
</dbReference>
<dbReference type="PROSITE" id="PS00908">
    <property type="entry name" value="MR_MLE_1"/>
    <property type="match status" value="1"/>
</dbReference>
<dbReference type="PROSITE" id="PS00909">
    <property type="entry name" value="MR_MLE_2"/>
    <property type="match status" value="1"/>
</dbReference>
<sequence>MKVEYHTVYLKKRFPLRISRGVFEGSDNLYISLTENGHTGWGEMAPGGTEGAETAAAGQAMLEQFCATGLSASIHDTWQNAHAAGVAPCALAALDMALWDLRAKQAGVPLYALLGLARRAVVSSVTVGINPPDVVRERVPLLLARGARALKIKLGSPEGIEADQAMFAAVFEAAQGSGAVLRVDANGGWSLKDARRMMGWLAEHDVEYIEQPLVRGAEDQLPDLFKDRAMPIFVDESCRMSGDIATFFQSVDGVNLKLMKCGGITEALRIVATARAFGLKTMIGCMGESSVSIAAGASIGALFDYIDLDSHLNLDPDPATGAPFENGITLPADQPGHGGVLSHA</sequence>
<protein>
    <recommendedName>
        <fullName>Hydrophobic dipeptide epimerase</fullName>
        <ecNumber>5.1.1.-</ecNumber>
    </recommendedName>
</protein>
<organism>
    <name type="scientific">Roseobacter litoralis (strain ATCC 49566 / DSM 6996 / JCM 21268 / NBRC 15278 / OCh 149)</name>
    <dbReference type="NCBI Taxonomy" id="391595"/>
    <lineage>
        <taxon>Bacteria</taxon>
        <taxon>Pseudomonadati</taxon>
        <taxon>Pseudomonadota</taxon>
        <taxon>Alphaproteobacteria</taxon>
        <taxon>Rhodobacterales</taxon>
        <taxon>Roseobacteraceae</taxon>
        <taxon>Roseobacter</taxon>
    </lineage>
</organism>
<proteinExistence type="inferred from homology"/>
<feature type="chain" id="PRO_0000429655" description="Hydrophobic dipeptide epimerase">
    <location>
        <begin position="1"/>
        <end position="344"/>
    </location>
</feature>
<feature type="binding site" evidence="1">
    <location>
        <position position="126"/>
    </location>
    <ligand>
        <name>substrate</name>
    </ligand>
</feature>
<feature type="binding site" evidence="1">
    <location>
        <begin position="151"/>
        <end position="153"/>
    </location>
    <ligand>
        <name>substrate</name>
    </ligand>
</feature>
<feature type="binding site" evidence="1">
    <location>
        <position position="184"/>
    </location>
    <ligand>
        <name>Mg(2+)</name>
        <dbReference type="ChEBI" id="CHEBI:18420"/>
    </ligand>
</feature>
<feature type="binding site" evidence="1">
    <location>
        <position position="210"/>
    </location>
    <ligand>
        <name>Mg(2+)</name>
        <dbReference type="ChEBI" id="CHEBI:18420"/>
    </ligand>
</feature>
<feature type="binding site" evidence="1">
    <location>
        <position position="235"/>
    </location>
    <ligand>
        <name>Mg(2+)</name>
        <dbReference type="ChEBI" id="CHEBI:18420"/>
    </ligand>
</feature>
<feature type="binding site" evidence="1">
    <location>
        <position position="257"/>
    </location>
    <ligand>
        <name>substrate</name>
    </ligand>
</feature>
<feature type="binding site" evidence="1">
    <location>
        <begin position="307"/>
        <end position="309"/>
    </location>
    <ligand>
        <name>substrate</name>
    </ligand>
</feature>
<evidence type="ECO:0000250" key="1"/>
<evidence type="ECO:0000269" key="2">
    <source>
    </source>
</evidence>
<evidence type="ECO:0000305" key="3"/>